<comment type="function">
    <text evidence="1">Required for the formation of a threonylcarbamoyl group on adenosine at position 37 (t(6)A37) in tRNAs that read codons beginning with adenine. Catalyzes the conversion of L-threonine, HCO(3)(-)/CO(2) and ATP to give threonylcarbamoyl-AMP (TC-AMP) as the acyladenylate intermediate, with the release of diphosphate.</text>
</comment>
<comment type="catalytic activity">
    <reaction evidence="1">
        <text>L-threonine + hydrogencarbonate + ATP = L-threonylcarbamoyladenylate + diphosphate + H2O</text>
        <dbReference type="Rhea" id="RHEA:36407"/>
        <dbReference type="ChEBI" id="CHEBI:15377"/>
        <dbReference type="ChEBI" id="CHEBI:17544"/>
        <dbReference type="ChEBI" id="CHEBI:30616"/>
        <dbReference type="ChEBI" id="CHEBI:33019"/>
        <dbReference type="ChEBI" id="CHEBI:57926"/>
        <dbReference type="ChEBI" id="CHEBI:73682"/>
        <dbReference type="EC" id="2.7.7.87"/>
    </reaction>
</comment>
<comment type="subcellular location">
    <subcellularLocation>
        <location evidence="1">Cytoplasm</location>
    </subcellularLocation>
</comment>
<comment type="similarity">
    <text evidence="1">Belongs to the SUA5 family. TsaC subfamily.</text>
</comment>
<keyword id="KW-0067">ATP-binding</keyword>
<keyword id="KW-0963">Cytoplasm</keyword>
<keyword id="KW-0547">Nucleotide-binding</keyword>
<keyword id="KW-0548">Nucleotidyltransferase</keyword>
<keyword id="KW-1185">Reference proteome</keyword>
<keyword id="KW-0808">Transferase</keyword>
<keyword id="KW-0819">tRNA processing</keyword>
<feature type="chain" id="PRO_0000352966" description="Threonylcarbamoyl-AMP synthase">
    <location>
        <begin position="1"/>
        <end position="191"/>
    </location>
</feature>
<feature type="domain" description="YrdC-like" evidence="1">
    <location>
        <begin position="10"/>
        <end position="191"/>
    </location>
</feature>
<sequence>MVPMNNWRAVPKLTQCVRTLLQGGVIAYPTEAVWGLGCDPDNDHAVEKILRLKKRPVHKGLILVAASIEQLDFLLHDLEPEYYQKLEASWPGANTWLIPHKGRVSPMVTGKHATVAVRVSNHPIVKALCEGFGGPIVSTSANPMGLSAAKSQMQVRRYFAKEALSYATGVVGGRSTPSVIRDLYTDAIIRA</sequence>
<dbReference type="EC" id="2.7.7.87" evidence="1"/>
<dbReference type="EMBL" id="CP000282">
    <property type="protein sequence ID" value="ABD79288.1"/>
    <property type="molecule type" value="Genomic_DNA"/>
</dbReference>
<dbReference type="SMR" id="Q21PU1"/>
<dbReference type="STRING" id="203122.Sde_0024"/>
<dbReference type="KEGG" id="sde:Sde_0024"/>
<dbReference type="eggNOG" id="COG0009">
    <property type="taxonomic scope" value="Bacteria"/>
</dbReference>
<dbReference type="HOGENOM" id="CLU_031397_6_0_6"/>
<dbReference type="Proteomes" id="UP000001947">
    <property type="component" value="Chromosome"/>
</dbReference>
<dbReference type="GO" id="GO:0005737">
    <property type="term" value="C:cytoplasm"/>
    <property type="evidence" value="ECO:0007669"/>
    <property type="project" value="UniProtKB-SubCell"/>
</dbReference>
<dbReference type="GO" id="GO:0005524">
    <property type="term" value="F:ATP binding"/>
    <property type="evidence" value="ECO:0007669"/>
    <property type="project" value="UniProtKB-UniRule"/>
</dbReference>
<dbReference type="GO" id="GO:0003725">
    <property type="term" value="F:double-stranded RNA binding"/>
    <property type="evidence" value="ECO:0007669"/>
    <property type="project" value="InterPro"/>
</dbReference>
<dbReference type="GO" id="GO:0061710">
    <property type="term" value="F:L-threonylcarbamoyladenylate synthase"/>
    <property type="evidence" value="ECO:0007669"/>
    <property type="project" value="UniProtKB-EC"/>
</dbReference>
<dbReference type="GO" id="GO:0000049">
    <property type="term" value="F:tRNA binding"/>
    <property type="evidence" value="ECO:0007669"/>
    <property type="project" value="TreeGrafter"/>
</dbReference>
<dbReference type="GO" id="GO:0006450">
    <property type="term" value="P:regulation of translational fidelity"/>
    <property type="evidence" value="ECO:0007669"/>
    <property type="project" value="TreeGrafter"/>
</dbReference>
<dbReference type="GO" id="GO:0002949">
    <property type="term" value="P:tRNA threonylcarbamoyladenosine modification"/>
    <property type="evidence" value="ECO:0007669"/>
    <property type="project" value="UniProtKB-UniRule"/>
</dbReference>
<dbReference type="Gene3D" id="3.90.870.10">
    <property type="entry name" value="DHBP synthase"/>
    <property type="match status" value="1"/>
</dbReference>
<dbReference type="HAMAP" id="MF_01852">
    <property type="entry name" value="TsaC"/>
    <property type="match status" value="1"/>
</dbReference>
<dbReference type="InterPro" id="IPR017945">
    <property type="entry name" value="DHBP_synth_RibB-like_a/b_dom"/>
</dbReference>
<dbReference type="InterPro" id="IPR006070">
    <property type="entry name" value="Sua5-like_dom"/>
</dbReference>
<dbReference type="InterPro" id="IPR023535">
    <property type="entry name" value="TC-AMP_synthase"/>
</dbReference>
<dbReference type="InterPro" id="IPR050156">
    <property type="entry name" value="TC-AMP_synthase_SUA5"/>
</dbReference>
<dbReference type="PANTHER" id="PTHR17490">
    <property type="entry name" value="SUA5"/>
    <property type="match status" value="1"/>
</dbReference>
<dbReference type="PANTHER" id="PTHR17490:SF18">
    <property type="entry name" value="THREONYLCARBAMOYL-AMP SYNTHASE"/>
    <property type="match status" value="1"/>
</dbReference>
<dbReference type="Pfam" id="PF01300">
    <property type="entry name" value="Sua5_yciO_yrdC"/>
    <property type="match status" value="1"/>
</dbReference>
<dbReference type="SUPFAM" id="SSF55821">
    <property type="entry name" value="YrdC/RibB"/>
    <property type="match status" value="1"/>
</dbReference>
<dbReference type="PROSITE" id="PS51163">
    <property type="entry name" value="YRDC"/>
    <property type="match status" value="1"/>
</dbReference>
<gene>
    <name evidence="1" type="primary">tsaC</name>
    <name type="synonym">rimN</name>
    <name type="ordered locus">Sde_0024</name>
</gene>
<name>TSAC_SACD2</name>
<reference key="1">
    <citation type="journal article" date="2008" name="PLoS Genet.">
        <title>Complete genome sequence of the complex carbohydrate-degrading marine bacterium, Saccharophagus degradans strain 2-40 T.</title>
        <authorList>
            <person name="Weiner R.M."/>
            <person name="Taylor L.E. II"/>
            <person name="Henrissat B."/>
            <person name="Hauser L."/>
            <person name="Land M."/>
            <person name="Coutinho P.M."/>
            <person name="Rancurel C."/>
            <person name="Saunders E.H."/>
            <person name="Longmire A.G."/>
            <person name="Zhang H."/>
            <person name="Bayer E.A."/>
            <person name="Gilbert H.J."/>
            <person name="Larimer F."/>
            <person name="Zhulin I.B."/>
            <person name="Ekborg N.A."/>
            <person name="Lamed R."/>
            <person name="Richardson P.M."/>
            <person name="Borovok I."/>
            <person name="Hutcheson S."/>
        </authorList>
    </citation>
    <scope>NUCLEOTIDE SEQUENCE [LARGE SCALE GENOMIC DNA]</scope>
    <source>
        <strain>2-40 / ATCC 43961 / DSM 17024</strain>
    </source>
</reference>
<organism>
    <name type="scientific">Saccharophagus degradans (strain 2-40 / ATCC 43961 / DSM 17024)</name>
    <dbReference type="NCBI Taxonomy" id="203122"/>
    <lineage>
        <taxon>Bacteria</taxon>
        <taxon>Pseudomonadati</taxon>
        <taxon>Pseudomonadota</taxon>
        <taxon>Gammaproteobacteria</taxon>
        <taxon>Cellvibrionales</taxon>
        <taxon>Cellvibrionaceae</taxon>
        <taxon>Saccharophagus</taxon>
    </lineage>
</organism>
<proteinExistence type="inferred from homology"/>
<protein>
    <recommendedName>
        <fullName evidence="1">Threonylcarbamoyl-AMP synthase</fullName>
        <shortName evidence="1">TC-AMP synthase</shortName>
        <ecNumber evidence="1">2.7.7.87</ecNumber>
    </recommendedName>
    <alternativeName>
        <fullName evidence="1">L-threonylcarbamoyladenylate synthase</fullName>
    </alternativeName>
    <alternativeName>
        <fullName evidence="1">t(6)A37 threonylcarbamoyladenosine biosynthesis protein TsaC</fullName>
    </alternativeName>
    <alternativeName>
        <fullName evidence="1">tRNA threonylcarbamoyladenosine biosynthesis protein TsaC</fullName>
    </alternativeName>
</protein>
<evidence type="ECO:0000255" key="1">
    <source>
        <dbReference type="HAMAP-Rule" id="MF_01852"/>
    </source>
</evidence>
<accession>Q21PU1</accession>